<organism evidence="4">
    <name type="scientific">Bos taurus</name>
    <name type="common">Bovine</name>
    <dbReference type="NCBI Taxonomy" id="9913"/>
    <lineage>
        <taxon>Eukaryota</taxon>
        <taxon>Metazoa</taxon>
        <taxon>Chordata</taxon>
        <taxon>Craniata</taxon>
        <taxon>Vertebrata</taxon>
        <taxon>Euteleostomi</taxon>
        <taxon>Mammalia</taxon>
        <taxon>Eutheria</taxon>
        <taxon>Laurasiatheria</taxon>
        <taxon>Artiodactyla</taxon>
        <taxon>Ruminantia</taxon>
        <taxon>Pecora</taxon>
        <taxon>Bovidae</taxon>
        <taxon>Bovinae</taxon>
        <taxon>Bos</taxon>
    </lineage>
</organism>
<reference key="1">
    <citation type="submission" date="2006-01" db="EMBL/GenBank/DDBJ databases">
        <authorList>
            <consortium name="NIH - Mammalian Gene Collection (MGC) project"/>
        </authorList>
    </citation>
    <scope>NUCLEOTIDE SEQUENCE [LARGE SCALE MRNA]</scope>
    <source>
        <strain>Hereford</strain>
        <tissue>Heart ventricle</tissue>
    </source>
</reference>
<reference evidence="4" key="2">
    <citation type="journal article" date="2001" name="J. Biol. Chem.">
        <title>The small subunit of the mammalian mitochondrial ribosome: identification of the full complement of ribosomal proteins present.</title>
        <authorList>
            <person name="Koc E.C."/>
            <person name="Burkhart W."/>
            <person name="Blackburn K."/>
            <person name="Moseley A."/>
            <person name="Spremulli L.L."/>
        </authorList>
    </citation>
    <scope>PROTEIN SEQUENCE OF 44-64 AND 96-103</scope>
    <scope>SUBCELLULAR LOCATION</scope>
    <scope>SUBUNIT</scope>
    <source>
        <tissue>Liver</tissue>
    </source>
</reference>
<reference evidence="5" key="3">
    <citation type="journal article" date="2014" name="Proc. Natl. Acad. Sci. U.S.A.">
        <title>Cryo-EM structure of the small subunit of the mammalian mitochondrial ribosome.</title>
        <authorList>
            <person name="Kaushal P.S."/>
            <person name="Sharma M.R."/>
            <person name="Booth T.M."/>
            <person name="Haque E.M."/>
            <person name="Tung C.S."/>
            <person name="Sanbonmatsu K.Y."/>
            <person name="Spremulli L.L."/>
            <person name="Agrawal R.K."/>
        </authorList>
    </citation>
    <scope>STRUCTURE BY ELECTRON MICROSCOPY (7.00 ANGSTROMS)</scope>
    <scope>SUBCELLULAR LOCATION</scope>
    <scope>SUBUNIT</scope>
</reference>
<name>RT18C_BOVIN</name>
<proteinExistence type="evidence at protein level"/>
<dbReference type="EMBL" id="BC112818">
    <property type="protein sequence ID" value="AAI12819.1"/>
    <property type="molecule type" value="mRNA"/>
</dbReference>
<dbReference type="RefSeq" id="NP_001039973.1">
    <property type="nucleotide sequence ID" value="NM_001046508.1"/>
</dbReference>
<dbReference type="PDB" id="3JD5">
    <property type="method" value="EM"/>
    <property type="resolution" value="7.00 A"/>
    <property type="chains" value="R=1-143"/>
</dbReference>
<dbReference type="PDB" id="6NEQ">
    <property type="method" value="EM"/>
    <property type="resolution" value="3.32 A"/>
    <property type="chains" value="R=1-143"/>
</dbReference>
<dbReference type="PDB" id="6NF8">
    <property type="method" value="EM"/>
    <property type="resolution" value="3.48 A"/>
    <property type="chains" value="R=1-143"/>
</dbReference>
<dbReference type="PDBsum" id="3JD5"/>
<dbReference type="PDBsum" id="6NEQ"/>
<dbReference type="PDBsum" id="6NF8"/>
<dbReference type="EMDB" id="EMD-9358"/>
<dbReference type="EMDB" id="EMD-9362"/>
<dbReference type="SMR" id="P82917"/>
<dbReference type="CORUM" id="P82917"/>
<dbReference type="FunCoup" id="P82917">
    <property type="interactions" value="2012"/>
</dbReference>
<dbReference type="IntAct" id="P82917">
    <property type="interactions" value="2"/>
</dbReference>
<dbReference type="STRING" id="9913.ENSBTAP00000024161"/>
<dbReference type="PaxDb" id="9913-ENSBTAP00000024161"/>
<dbReference type="Ensembl" id="ENSBTAT00000024161.5">
    <property type="protein sequence ID" value="ENSBTAP00000024161.3"/>
    <property type="gene ID" value="ENSBTAG00000018155.5"/>
</dbReference>
<dbReference type="GeneID" id="613561"/>
<dbReference type="KEGG" id="bta:613561"/>
<dbReference type="CTD" id="51023"/>
<dbReference type="VEuPathDB" id="HostDB:ENSBTAG00000018155"/>
<dbReference type="VGNC" id="VGNC:31659">
    <property type="gene designation" value="MRPS18C"/>
</dbReference>
<dbReference type="eggNOG" id="KOG3162">
    <property type="taxonomic scope" value="Eukaryota"/>
</dbReference>
<dbReference type="GeneTree" id="ENSGT00390000003791"/>
<dbReference type="HOGENOM" id="CLU_139337_2_0_1"/>
<dbReference type="InParanoid" id="P82917"/>
<dbReference type="OMA" id="PHYKNVR"/>
<dbReference type="OrthoDB" id="10066799at2759"/>
<dbReference type="TreeFam" id="TF315059"/>
<dbReference type="Reactome" id="R-BTA-5389840">
    <property type="pathway name" value="Mitochondrial translation elongation"/>
</dbReference>
<dbReference type="Reactome" id="R-BTA-5419276">
    <property type="pathway name" value="Mitochondrial translation termination"/>
</dbReference>
<dbReference type="Proteomes" id="UP000009136">
    <property type="component" value="Chromosome 6"/>
</dbReference>
<dbReference type="Bgee" id="ENSBTAG00000018155">
    <property type="expression patterns" value="Expressed in oocyte and 105 other cell types or tissues"/>
</dbReference>
<dbReference type="GO" id="GO:0005743">
    <property type="term" value="C:mitochondrial inner membrane"/>
    <property type="evidence" value="ECO:0000304"/>
    <property type="project" value="Reactome"/>
</dbReference>
<dbReference type="GO" id="GO:0005763">
    <property type="term" value="C:mitochondrial small ribosomal subunit"/>
    <property type="evidence" value="ECO:0000314"/>
    <property type="project" value="UniProtKB"/>
</dbReference>
<dbReference type="GO" id="GO:0070181">
    <property type="term" value="F:small ribosomal subunit rRNA binding"/>
    <property type="evidence" value="ECO:0000318"/>
    <property type="project" value="GO_Central"/>
</dbReference>
<dbReference type="GO" id="GO:0003735">
    <property type="term" value="F:structural constituent of ribosome"/>
    <property type="evidence" value="ECO:0000318"/>
    <property type="project" value="GO_Central"/>
</dbReference>
<dbReference type="GO" id="GO:0006412">
    <property type="term" value="P:translation"/>
    <property type="evidence" value="ECO:0000318"/>
    <property type="project" value="GO_Central"/>
</dbReference>
<dbReference type="FunFam" id="4.10.640.10:FF:000007">
    <property type="entry name" value="28S ribosomal protein S18c, mitochondrial"/>
    <property type="match status" value="1"/>
</dbReference>
<dbReference type="Gene3D" id="4.10.640.10">
    <property type="entry name" value="Ribosomal protein S18"/>
    <property type="match status" value="1"/>
</dbReference>
<dbReference type="InterPro" id="IPR001648">
    <property type="entry name" value="Ribosomal_bS18"/>
</dbReference>
<dbReference type="InterPro" id="IPR018275">
    <property type="entry name" value="Ribosomal_bS18_CS"/>
</dbReference>
<dbReference type="InterPro" id="IPR036870">
    <property type="entry name" value="Ribosomal_bS18_sf"/>
</dbReference>
<dbReference type="NCBIfam" id="TIGR00165">
    <property type="entry name" value="S18"/>
    <property type="match status" value="1"/>
</dbReference>
<dbReference type="PANTHER" id="PTHR13479">
    <property type="entry name" value="30S RIBOSOMAL PROTEIN S18"/>
    <property type="match status" value="1"/>
</dbReference>
<dbReference type="PANTHER" id="PTHR13479:SF40">
    <property type="entry name" value="SMALL RIBOSOMAL SUBUNIT PROTEIN BS18M"/>
    <property type="match status" value="1"/>
</dbReference>
<dbReference type="Pfam" id="PF01084">
    <property type="entry name" value="Ribosomal_S18"/>
    <property type="match status" value="1"/>
</dbReference>
<dbReference type="PRINTS" id="PR00974">
    <property type="entry name" value="RIBOSOMALS18"/>
</dbReference>
<dbReference type="SUPFAM" id="SSF46911">
    <property type="entry name" value="Ribosomal protein S18"/>
    <property type="match status" value="1"/>
</dbReference>
<dbReference type="PROSITE" id="PS00057">
    <property type="entry name" value="RIBOSOMAL_S18"/>
    <property type="match status" value="1"/>
</dbReference>
<sequence>MAAVLGLCGGLGKRKFTRFPTAFVCLTNSGTRAVLWRSCSQCKQVTSSEDLPIPMENPYKEPLKKCILCEKRVDYKNVQLLSQFISPFTGCIYGRHITGLCGKKQREITKAIKRAQILGFMPVTYKDPAYLKDPKVCNIRYRE</sequence>
<protein>
    <recommendedName>
        <fullName evidence="4">Small ribosomal subunit protein bS18m</fullName>
    </recommendedName>
    <alternativeName>
        <fullName>28S ribosomal protein S18-1, mitochondrial</fullName>
        <shortName>MRP-S18-1</shortName>
    </alternativeName>
    <alternativeName>
        <fullName>28S ribosomal protein S18c, mitochondrial</fullName>
        <shortName>MRP-S18-c</shortName>
        <shortName>Mrps18-c</shortName>
        <shortName>S18mt-c</shortName>
    </alternativeName>
</protein>
<keyword id="KW-0002">3D-structure</keyword>
<keyword id="KW-0903">Direct protein sequencing</keyword>
<keyword id="KW-0496">Mitochondrion</keyword>
<keyword id="KW-1185">Reference proteome</keyword>
<keyword id="KW-0687">Ribonucleoprotein</keyword>
<keyword id="KW-0689">Ribosomal protein</keyword>
<keyword id="KW-0809">Transit peptide</keyword>
<gene>
    <name type="primary">MRPS18C</name>
</gene>
<feature type="transit peptide" description="Mitochondrion" evidence="1">
    <location>
        <begin position="1"/>
        <end status="unknown"/>
    </location>
</feature>
<feature type="chain" id="PRO_0000111317" description="Small ribosomal subunit protein bS18m">
    <location>
        <begin status="unknown"/>
        <end position="143"/>
    </location>
</feature>
<feature type="strand" evidence="6">
    <location>
        <begin position="67"/>
        <end position="70"/>
    </location>
</feature>
<feature type="helix" evidence="6">
    <location>
        <begin position="78"/>
        <end position="81"/>
    </location>
</feature>
<feature type="helix" evidence="6">
    <location>
        <begin position="82"/>
        <end position="84"/>
    </location>
</feature>
<feature type="turn" evidence="6">
    <location>
        <begin position="87"/>
        <end position="89"/>
    </location>
</feature>
<feature type="helix" evidence="6">
    <location>
        <begin position="95"/>
        <end position="98"/>
    </location>
</feature>
<feature type="helix" evidence="6">
    <location>
        <begin position="102"/>
        <end position="117"/>
    </location>
</feature>
<feature type="strand" evidence="6">
    <location>
        <begin position="123"/>
        <end position="125"/>
    </location>
</feature>
<feature type="helix" evidence="6">
    <location>
        <begin position="128"/>
        <end position="130"/>
    </location>
</feature>
<feature type="strand" evidence="7">
    <location>
        <begin position="131"/>
        <end position="133"/>
    </location>
</feature>
<accession>P82917</accession>
<accession>Q2KI03</accession>
<comment type="subunit">
    <text evidence="2 3">Component of the mitochondrial ribosome small subunit (28S) which comprises a 12S rRNA and about 30 distinct proteins.</text>
</comment>
<comment type="subcellular location">
    <subcellularLocation>
        <location evidence="2 3">Mitochondrion</location>
    </subcellularLocation>
</comment>
<comment type="similarity">
    <text evidence="4">Belongs to the bacterial ribosomal protein bS18 family.</text>
</comment>
<evidence type="ECO:0000255" key="1"/>
<evidence type="ECO:0000269" key="2">
    <source>
    </source>
</evidence>
<evidence type="ECO:0000269" key="3">
    <source>
    </source>
</evidence>
<evidence type="ECO:0000305" key="4"/>
<evidence type="ECO:0007744" key="5">
    <source>
        <dbReference type="PDB" id="3JD5"/>
    </source>
</evidence>
<evidence type="ECO:0007829" key="6">
    <source>
        <dbReference type="PDB" id="6NEQ"/>
    </source>
</evidence>
<evidence type="ECO:0007829" key="7">
    <source>
        <dbReference type="PDB" id="6NF8"/>
    </source>
</evidence>